<organism>
    <name type="scientific">Deinococcus geothermalis (strain DSM 11300 / CIP 105573 / AG-3a)</name>
    <dbReference type="NCBI Taxonomy" id="319795"/>
    <lineage>
        <taxon>Bacteria</taxon>
        <taxon>Thermotogati</taxon>
        <taxon>Deinococcota</taxon>
        <taxon>Deinococci</taxon>
        <taxon>Deinococcales</taxon>
        <taxon>Deinococcaceae</taxon>
        <taxon>Deinococcus</taxon>
    </lineage>
</organism>
<protein>
    <recommendedName>
        <fullName evidence="1">Transcriptional repressor NrdR</fullName>
    </recommendedName>
</protein>
<feature type="chain" id="PRO_0000264172" description="Transcriptional repressor NrdR">
    <location>
        <begin position="1"/>
        <end position="150"/>
    </location>
</feature>
<feature type="domain" description="ATP-cone" evidence="1">
    <location>
        <begin position="49"/>
        <end position="136"/>
    </location>
</feature>
<feature type="zinc finger region" evidence="1">
    <location>
        <begin position="3"/>
        <end position="34"/>
    </location>
</feature>
<feature type="region of interest" description="Disordered" evidence="2">
    <location>
        <begin position="1"/>
        <end position="22"/>
    </location>
</feature>
<reference key="1">
    <citation type="submission" date="2006-04" db="EMBL/GenBank/DDBJ databases">
        <title>Complete sequence of chromosome of Deinococcus geothermalis DSM 11300.</title>
        <authorList>
            <person name="Copeland A."/>
            <person name="Lucas S."/>
            <person name="Lapidus A."/>
            <person name="Barry K."/>
            <person name="Detter J.C."/>
            <person name="Glavina del Rio T."/>
            <person name="Hammon N."/>
            <person name="Israni S."/>
            <person name="Dalin E."/>
            <person name="Tice H."/>
            <person name="Pitluck S."/>
            <person name="Brettin T."/>
            <person name="Bruce D."/>
            <person name="Han C."/>
            <person name="Tapia R."/>
            <person name="Saunders E."/>
            <person name="Gilna P."/>
            <person name="Schmutz J."/>
            <person name="Larimer F."/>
            <person name="Land M."/>
            <person name="Hauser L."/>
            <person name="Kyrpides N."/>
            <person name="Kim E."/>
            <person name="Daly M.J."/>
            <person name="Fredrickson J.K."/>
            <person name="Makarova K.S."/>
            <person name="Gaidamakova E.K."/>
            <person name="Zhai M."/>
            <person name="Richardson P."/>
        </authorList>
    </citation>
    <scope>NUCLEOTIDE SEQUENCE [LARGE SCALE GENOMIC DNA]</scope>
    <source>
        <strain>DSM 11300 / CIP 105573 / AG-3a</strain>
    </source>
</reference>
<keyword id="KW-0067">ATP-binding</keyword>
<keyword id="KW-0238">DNA-binding</keyword>
<keyword id="KW-0479">Metal-binding</keyword>
<keyword id="KW-0547">Nucleotide-binding</keyword>
<keyword id="KW-0678">Repressor</keyword>
<keyword id="KW-0804">Transcription</keyword>
<keyword id="KW-0805">Transcription regulation</keyword>
<keyword id="KW-0862">Zinc</keyword>
<keyword id="KW-0863">Zinc-finger</keyword>
<gene>
    <name evidence="1" type="primary">nrdR</name>
    <name type="ordered locus">Dgeo_2033</name>
</gene>
<comment type="function">
    <text evidence="1">Negatively regulates transcription of bacterial ribonucleotide reductase nrd genes and operons by binding to NrdR-boxes.</text>
</comment>
<comment type="cofactor">
    <cofactor evidence="1">
        <name>Zn(2+)</name>
        <dbReference type="ChEBI" id="CHEBI:29105"/>
    </cofactor>
    <text evidence="1">Binds 1 zinc ion.</text>
</comment>
<comment type="similarity">
    <text evidence="1">Belongs to the NrdR family.</text>
</comment>
<proteinExistence type="inferred from homology"/>
<evidence type="ECO:0000255" key="1">
    <source>
        <dbReference type="HAMAP-Rule" id="MF_00440"/>
    </source>
</evidence>
<evidence type="ECO:0000256" key="2">
    <source>
        <dbReference type="SAM" id="MobiDB-lite"/>
    </source>
</evidence>
<accession>Q1IWQ7</accession>
<name>NRDR_DEIGD</name>
<dbReference type="EMBL" id="CP000359">
    <property type="protein sequence ID" value="ABF46327.1"/>
    <property type="molecule type" value="Genomic_DNA"/>
</dbReference>
<dbReference type="RefSeq" id="WP_011531153.1">
    <property type="nucleotide sequence ID" value="NC_008025.1"/>
</dbReference>
<dbReference type="SMR" id="Q1IWQ7"/>
<dbReference type="STRING" id="319795.Dgeo_2033"/>
<dbReference type="KEGG" id="dge:Dgeo_2033"/>
<dbReference type="eggNOG" id="COG1327">
    <property type="taxonomic scope" value="Bacteria"/>
</dbReference>
<dbReference type="HOGENOM" id="CLU_108412_0_0_0"/>
<dbReference type="Proteomes" id="UP000002431">
    <property type="component" value="Chromosome"/>
</dbReference>
<dbReference type="GO" id="GO:0005524">
    <property type="term" value="F:ATP binding"/>
    <property type="evidence" value="ECO:0007669"/>
    <property type="project" value="UniProtKB-KW"/>
</dbReference>
<dbReference type="GO" id="GO:0003677">
    <property type="term" value="F:DNA binding"/>
    <property type="evidence" value="ECO:0007669"/>
    <property type="project" value="UniProtKB-KW"/>
</dbReference>
<dbReference type="GO" id="GO:0008270">
    <property type="term" value="F:zinc ion binding"/>
    <property type="evidence" value="ECO:0007669"/>
    <property type="project" value="UniProtKB-UniRule"/>
</dbReference>
<dbReference type="GO" id="GO:0045892">
    <property type="term" value="P:negative regulation of DNA-templated transcription"/>
    <property type="evidence" value="ECO:0007669"/>
    <property type="project" value="UniProtKB-UniRule"/>
</dbReference>
<dbReference type="HAMAP" id="MF_00440">
    <property type="entry name" value="NrdR"/>
    <property type="match status" value="1"/>
</dbReference>
<dbReference type="InterPro" id="IPR005144">
    <property type="entry name" value="ATP-cone_dom"/>
</dbReference>
<dbReference type="InterPro" id="IPR055173">
    <property type="entry name" value="NrdR-like_N"/>
</dbReference>
<dbReference type="InterPro" id="IPR003796">
    <property type="entry name" value="RNR_NrdR-like"/>
</dbReference>
<dbReference type="NCBIfam" id="TIGR00244">
    <property type="entry name" value="transcriptional regulator NrdR"/>
    <property type="match status" value="1"/>
</dbReference>
<dbReference type="PANTHER" id="PTHR30455">
    <property type="entry name" value="TRANSCRIPTIONAL REPRESSOR NRDR"/>
    <property type="match status" value="1"/>
</dbReference>
<dbReference type="PANTHER" id="PTHR30455:SF2">
    <property type="entry name" value="TRANSCRIPTIONAL REPRESSOR NRDR"/>
    <property type="match status" value="1"/>
</dbReference>
<dbReference type="Pfam" id="PF03477">
    <property type="entry name" value="ATP-cone"/>
    <property type="match status" value="1"/>
</dbReference>
<dbReference type="Pfam" id="PF22811">
    <property type="entry name" value="Zn_ribbon_NrdR"/>
    <property type="match status" value="1"/>
</dbReference>
<dbReference type="PROSITE" id="PS51161">
    <property type="entry name" value="ATP_CONE"/>
    <property type="match status" value="1"/>
</dbReference>
<sequence length="150" mass="17399">MKCPYCSAPDSRVVNSRPSDDGASIRRRRECLRCNRRFTTYERAQLEPLMVLKRGGQREAFNPDKLLRGLILATEKRPVDPEQLRAFAYGFEDEVQASEITSEEIGRRAMTFLRPLDDVAYIRFASVYRDFDSLERFIEEIQGLKGRGED</sequence>